<accession>Q8R5Z1</accession>
<sequence>MKVRVHELAKKYEIKNKEFLEILKKDIGITVTSHLSNLDEDQVNKIDDYFAKMNMLKVETVEPVKVHKEKKEEKPIRKIMDEDENDEGEGYSQKNNKKAKFQQTKNKKNNNITFEEDGNSHKNKGKKKKGRRTDFILKTVEATPDVVEEDGIKIIKFRGELTLGDFAEKLGVNSAEIIKKLFLKGQMLTINSPITLSMAEDLAADYDVLIEEEQEVELDFGEKFDLEIEDKAADLKERPPVITIMGHVDHGKTSLLDAIRTTNVVGGEAGGITQKIGAYQVERDGKRITFIDTPGHEAFTDMRARGAQVTDIAILVVAADDGVMPQTVEAISHAKVAKVPIIVAVNKIDKPEANPMKVKQELMEHGLVSAEWGGDVEFVEVSAKQKINLDGLLDTILITAEILELKGNNKKRAKGVVLESRLDPKIGPIADILVQEGTLKIGDVIVAGEVQGKVKALLNDKGERVNNATVSQPVEVIGFNNVPDAGDTMYVIQNEQHAKRIVEEVRKERKIQETTKKTISLESLSDQFKHEDLKELNLILRADSKGSVDALRDSLLKLSNDEVAVSIIQAASGAITESDVKLAEAAGAIIIGYNVRPTTKALKEAEVSKVEIRTSGIIYHITEDIEKALAGMLEPEYREEYLGRIEIKKVFKVSKVGNIAGCIVIDGKVKNDSNIRILRDNVVIYEGKLASLKRFKDDAKEVVAGQECGLGVENFNDIKDGDVVEAFEMVEVKRTLK</sequence>
<organism>
    <name type="scientific">Fusobacterium nucleatum subsp. nucleatum (strain ATCC 25586 / DSM 15643 / BCRC 10681 / CIP 101130 / JCM 8532 / KCTC 2640 / LMG 13131 / VPI 4355)</name>
    <dbReference type="NCBI Taxonomy" id="190304"/>
    <lineage>
        <taxon>Bacteria</taxon>
        <taxon>Fusobacteriati</taxon>
        <taxon>Fusobacteriota</taxon>
        <taxon>Fusobacteriia</taxon>
        <taxon>Fusobacteriales</taxon>
        <taxon>Fusobacteriaceae</taxon>
        <taxon>Fusobacterium</taxon>
    </lineage>
</organism>
<evidence type="ECO:0000250" key="1"/>
<evidence type="ECO:0000255" key="2">
    <source>
        <dbReference type="HAMAP-Rule" id="MF_00100"/>
    </source>
</evidence>
<evidence type="ECO:0000256" key="3">
    <source>
        <dbReference type="SAM" id="MobiDB-lite"/>
    </source>
</evidence>
<dbReference type="EMBL" id="AE009951">
    <property type="protein sequence ID" value="AAL94110.1"/>
    <property type="molecule type" value="Genomic_DNA"/>
</dbReference>
<dbReference type="RefSeq" id="NP_602811.1">
    <property type="nucleotide sequence ID" value="NC_003454.1"/>
</dbReference>
<dbReference type="SMR" id="Q8R5Z1"/>
<dbReference type="FunCoup" id="Q8R5Z1">
    <property type="interactions" value="379"/>
</dbReference>
<dbReference type="STRING" id="190304.FN2020"/>
<dbReference type="PaxDb" id="190304-FN2020"/>
<dbReference type="EnsemblBacteria" id="AAL94110">
    <property type="protein sequence ID" value="AAL94110"/>
    <property type="gene ID" value="FN2020"/>
</dbReference>
<dbReference type="KEGG" id="fnu:FN2020"/>
<dbReference type="PATRIC" id="fig|190304.8.peg.488"/>
<dbReference type="eggNOG" id="COG0532">
    <property type="taxonomic scope" value="Bacteria"/>
</dbReference>
<dbReference type="HOGENOM" id="CLU_006301_5_1_0"/>
<dbReference type="InParanoid" id="Q8R5Z1"/>
<dbReference type="BioCyc" id="FNUC190304:G1FZS-507-MONOMER"/>
<dbReference type="Proteomes" id="UP000002521">
    <property type="component" value="Chromosome"/>
</dbReference>
<dbReference type="GO" id="GO:0005737">
    <property type="term" value="C:cytoplasm"/>
    <property type="evidence" value="ECO:0000318"/>
    <property type="project" value="GO_Central"/>
</dbReference>
<dbReference type="GO" id="GO:0005829">
    <property type="term" value="C:cytosol"/>
    <property type="evidence" value="ECO:0000318"/>
    <property type="project" value="GO_Central"/>
</dbReference>
<dbReference type="GO" id="GO:0005525">
    <property type="term" value="F:GTP binding"/>
    <property type="evidence" value="ECO:0007669"/>
    <property type="project" value="UniProtKB-KW"/>
</dbReference>
<dbReference type="GO" id="GO:0003924">
    <property type="term" value="F:GTPase activity"/>
    <property type="evidence" value="ECO:0007669"/>
    <property type="project" value="UniProtKB-UniRule"/>
</dbReference>
<dbReference type="GO" id="GO:0003743">
    <property type="term" value="F:translation initiation factor activity"/>
    <property type="evidence" value="ECO:0000318"/>
    <property type="project" value="GO_Central"/>
</dbReference>
<dbReference type="GO" id="GO:0006413">
    <property type="term" value="P:translational initiation"/>
    <property type="evidence" value="ECO:0000318"/>
    <property type="project" value="GO_Central"/>
</dbReference>
<dbReference type="CDD" id="cd01887">
    <property type="entry name" value="IF2_eIF5B"/>
    <property type="match status" value="1"/>
</dbReference>
<dbReference type="CDD" id="cd03702">
    <property type="entry name" value="IF2_mtIF2_II"/>
    <property type="match status" value="1"/>
</dbReference>
<dbReference type="CDD" id="cd03692">
    <property type="entry name" value="mtIF2_IVc"/>
    <property type="match status" value="1"/>
</dbReference>
<dbReference type="FunFam" id="2.40.30.10:FF:000008">
    <property type="entry name" value="Translation initiation factor IF-2"/>
    <property type="match status" value="1"/>
</dbReference>
<dbReference type="FunFam" id="2.40.30.10:FF:000054">
    <property type="entry name" value="Translation initiation factor IF-2"/>
    <property type="match status" value="1"/>
</dbReference>
<dbReference type="FunFam" id="3.40.50.10050:FF:000001">
    <property type="entry name" value="Translation initiation factor IF-2"/>
    <property type="match status" value="1"/>
</dbReference>
<dbReference type="FunFam" id="3.40.50.300:FF:000019">
    <property type="entry name" value="Translation initiation factor IF-2"/>
    <property type="match status" value="1"/>
</dbReference>
<dbReference type="Gene3D" id="1.10.10.2480">
    <property type="match status" value="1"/>
</dbReference>
<dbReference type="Gene3D" id="3.40.50.300">
    <property type="entry name" value="P-loop containing nucleotide triphosphate hydrolases"/>
    <property type="match status" value="1"/>
</dbReference>
<dbReference type="Gene3D" id="2.40.30.10">
    <property type="entry name" value="Translation factors"/>
    <property type="match status" value="2"/>
</dbReference>
<dbReference type="Gene3D" id="3.40.50.10050">
    <property type="entry name" value="Translation initiation factor IF- 2, domain 3"/>
    <property type="match status" value="1"/>
</dbReference>
<dbReference type="HAMAP" id="MF_00100_B">
    <property type="entry name" value="IF_2_B"/>
    <property type="match status" value="1"/>
</dbReference>
<dbReference type="InterPro" id="IPR053905">
    <property type="entry name" value="EF-G-like_DII"/>
</dbReference>
<dbReference type="InterPro" id="IPR004161">
    <property type="entry name" value="EFTu-like_2"/>
</dbReference>
<dbReference type="InterPro" id="IPR044145">
    <property type="entry name" value="IF2_II"/>
</dbReference>
<dbReference type="InterPro" id="IPR006847">
    <property type="entry name" value="IF2_N"/>
</dbReference>
<dbReference type="InterPro" id="IPR027417">
    <property type="entry name" value="P-loop_NTPase"/>
</dbReference>
<dbReference type="InterPro" id="IPR005225">
    <property type="entry name" value="Small_GTP-bd"/>
</dbReference>
<dbReference type="InterPro" id="IPR000795">
    <property type="entry name" value="T_Tr_GTP-bd_dom"/>
</dbReference>
<dbReference type="InterPro" id="IPR000178">
    <property type="entry name" value="TF_IF2_bacterial-like"/>
</dbReference>
<dbReference type="InterPro" id="IPR015760">
    <property type="entry name" value="TIF_IF2"/>
</dbReference>
<dbReference type="InterPro" id="IPR023115">
    <property type="entry name" value="TIF_IF2_dom3"/>
</dbReference>
<dbReference type="InterPro" id="IPR036925">
    <property type="entry name" value="TIF_IF2_dom3_sf"/>
</dbReference>
<dbReference type="InterPro" id="IPR009000">
    <property type="entry name" value="Transl_B-barrel_sf"/>
</dbReference>
<dbReference type="NCBIfam" id="TIGR00487">
    <property type="entry name" value="IF-2"/>
    <property type="match status" value="1"/>
</dbReference>
<dbReference type="NCBIfam" id="TIGR00231">
    <property type="entry name" value="small_GTP"/>
    <property type="match status" value="1"/>
</dbReference>
<dbReference type="PANTHER" id="PTHR43381:SF5">
    <property type="entry name" value="TR-TYPE G DOMAIN-CONTAINING PROTEIN"/>
    <property type="match status" value="1"/>
</dbReference>
<dbReference type="PANTHER" id="PTHR43381">
    <property type="entry name" value="TRANSLATION INITIATION FACTOR IF-2-RELATED"/>
    <property type="match status" value="1"/>
</dbReference>
<dbReference type="Pfam" id="PF22042">
    <property type="entry name" value="EF-G_D2"/>
    <property type="match status" value="1"/>
</dbReference>
<dbReference type="Pfam" id="PF00009">
    <property type="entry name" value="GTP_EFTU"/>
    <property type="match status" value="1"/>
</dbReference>
<dbReference type="Pfam" id="PF03144">
    <property type="entry name" value="GTP_EFTU_D2"/>
    <property type="match status" value="1"/>
</dbReference>
<dbReference type="Pfam" id="PF11987">
    <property type="entry name" value="IF-2"/>
    <property type="match status" value="1"/>
</dbReference>
<dbReference type="Pfam" id="PF04760">
    <property type="entry name" value="IF2_N"/>
    <property type="match status" value="2"/>
</dbReference>
<dbReference type="SUPFAM" id="SSF52156">
    <property type="entry name" value="Initiation factor IF2/eIF5b, domain 3"/>
    <property type="match status" value="1"/>
</dbReference>
<dbReference type="SUPFAM" id="SSF52540">
    <property type="entry name" value="P-loop containing nucleoside triphosphate hydrolases"/>
    <property type="match status" value="1"/>
</dbReference>
<dbReference type="SUPFAM" id="SSF50447">
    <property type="entry name" value="Translation proteins"/>
    <property type="match status" value="2"/>
</dbReference>
<dbReference type="PROSITE" id="PS51722">
    <property type="entry name" value="G_TR_2"/>
    <property type="match status" value="1"/>
</dbReference>
<dbReference type="PROSITE" id="PS01176">
    <property type="entry name" value="IF2"/>
    <property type="match status" value="1"/>
</dbReference>
<reference key="1">
    <citation type="journal article" date="2002" name="J. Bacteriol.">
        <title>Genome sequence and analysis of the oral bacterium Fusobacterium nucleatum strain ATCC 25586.</title>
        <authorList>
            <person name="Kapatral V."/>
            <person name="Anderson I."/>
            <person name="Ivanova N."/>
            <person name="Reznik G."/>
            <person name="Los T."/>
            <person name="Lykidis A."/>
            <person name="Bhattacharyya A."/>
            <person name="Bartman A."/>
            <person name="Gardner W."/>
            <person name="Grechkin G."/>
            <person name="Zhu L."/>
            <person name="Vasieva O."/>
            <person name="Chu L."/>
            <person name="Kogan Y."/>
            <person name="Chaga O."/>
            <person name="Goltsman E."/>
            <person name="Bernal A."/>
            <person name="Larsen N."/>
            <person name="D'Souza M."/>
            <person name="Walunas T."/>
            <person name="Pusch G."/>
            <person name="Haselkorn R."/>
            <person name="Fonstein M."/>
            <person name="Kyrpides N.C."/>
            <person name="Overbeek R."/>
        </authorList>
    </citation>
    <scope>NUCLEOTIDE SEQUENCE [LARGE SCALE GENOMIC DNA]</scope>
    <source>
        <strain>ATCC 25586 / DSM 15643 / BCRC 10681 / CIP 101130 / JCM 8532 / KCTC 2640 / LMG 13131 / VPI 4355</strain>
    </source>
</reference>
<comment type="function">
    <text evidence="2">One of the essential components for the initiation of protein synthesis. Protects formylmethionyl-tRNA from spontaneous hydrolysis and promotes its binding to the 30S ribosomal subunits. Also involved in the hydrolysis of GTP during the formation of the 70S ribosomal complex.</text>
</comment>
<comment type="subcellular location">
    <subcellularLocation>
        <location evidence="2">Cytoplasm</location>
    </subcellularLocation>
</comment>
<comment type="similarity">
    <text evidence="2">Belongs to the TRAFAC class translation factor GTPase superfamily. Classic translation factor GTPase family. IF-2 subfamily.</text>
</comment>
<proteinExistence type="inferred from homology"/>
<keyword id="KW-0963">Cytoplasm</keyword>
<keyword id="KW-0342">GTP-binding</keyword>
<keyword id="KW-0396">Initiation factor</keyword>
<keyword id="KW-0547">Nucleotide-binding</keyword>
<keyword id="KW-0648">Protein biosynthesis</keyword>
<keyword id="KW-1185">Reference proteome</keyword>
<gene>
    <name evidence="2" type="primary">infB</name>
    <name type="ordered locus">FN2020</name>
</gene>
<feature type="chain" id="PRO_0000137204" description="Translation initiation factor IF-2">
    <location>
        <begin position="1"/>
        <end position="737"/>
    </location>
</feature>
<feature type="domain" description="tr-type G">
    <location>
        <begin position="237"/>
        <end position="404"/>
    </location>
</feature>
<feature type="region of interest" description="Disordered" evidence="3">
    <location>
        <begin position="69"/>
        <end position="130"/>
    </location>
</feature>
<feature type="region of interest" description="G1" evidence="1">
    <location>
        <begin position="246"/>
        <end position="253"/>
    </location>
</feature>
<feature type="region of interest" description="G2" evidence="1">
    <location>
        <begin position="271"/>
        <end position="275"/>
    </location>
</feature>
<feature type="region of interest" description="G3" evidence="1">
    <location>
        <begin position="292"/>
        <end position="295"/>
    </location>
</feature>
<feature type="region of interest" description="G4" evidence="1">
    <location>
        <begin position="346"/>
        <end position="349"/>
    </location>
</feature>
<feature type="region of interest" description="G5" evidence="1">
    <location>
        <begin position="382"/>
        <end position="384"/>
    </location>
</feature>
<feature type="compositionally biased region" description="Basic and acidic residues" evidence="3">
    <location>
        <begin position="69"/>
        <end position="80"/>
    </location>
</feature>
<feature type="compositionally biased region" description="Basic residues" evidence="3">
    <location>
        <begin position="95"/>
        <end position="108"/>
    </location>
</feature>
<feature type="compositionally biased region" description="Basic residues" evidence="3">
    <location>
        <begin position="121"/>
        <end position="130"/>
    </location>
</feature>
<feature type="binding site" evidence="2">
    <location>
        <begin position="246"/>
        <end position="253"/>
    </location>
    <ligand>
        <name>GTP</name>
        <dbReference type="ChEBI" id="CHEBI:37565"/>
    </ligand>
</feature>
<feature type="binding site" evidence="2">
    <location>
        <begin position="292"/>
        <end position="296"/>
    </location>
    <ligand>
        <name>GTP</name>
        <dbReference type="ChEBI" id="CHEBI:37565"/>
    </ligand>
</feature>
<feature type="binding site" evidence="2">
    <location>
        <begin position="346"/>
        <end position="349"/>
    </location>
    <ligand>
        <name>GTP</name>
        <dbReference type="ChEBI" id="CHEBI:37565"/>
    </ligand>
</feature>
<name>IF2_FUSNN</name>
<protein>
    <recommendedName>
        <fullName evidence="2">Translation initiation factor IF-2</fullName>
    </recommendedName>
</protein>